<proteinExistence type="inferred from homology"/>
<organism>
    <name type="scientific">Borrelia garinii subsp. bavariensis (strain ATCC BAA-2496 / DSM 23469 / PBi)</name>
    <name type="common">Borreliella bavariensis</name>
    <dbReference type="NCBI Taxonomy" id="290434"/>
    <lineage>
        <taxon>Bacteria</taxon>
        <taxon>Pseudomonadati</taxon>
        <taxon>Spirochaetota</taxon>
        <taxon>Spirochaetia</taxon>
        <taxon>Spirochaetales</taxon>
        <taxon>Borreliaceae</taxon>
        <taxon>Borreliella</taxon>
    </lineage>
</organism>
<feature type="chain" id="PRO_0000229108" description="2,3-bisphosphoglycerate-dependent phosphoglycerate mutase">
    <location>
        <begin position="1"/>
        <end position="248"/>
    </location>
</feature>
<feature type="active site" description="Tele-phosphohistidine intermediate" evidence="1">
    <location>
        <position position="9"/>
    </location>
</feature>
<feature type="active site" description="Proton donor/acceptor" evidence="1">
    <location>
        <position position="87"/>
    </location>
</feature>
<feature type="binding site" evidence="1">
    <location>
        <begin position="8"/>
        <end position="15"/>
    </location>
    <ligand>
        <name>substrate</name>
    </ligand>
</feature>
<feature type="binding site" evidence="1">
    <location>
        <begin position="21"/>
        <end position="22"/>
    </location>
    <ligand>
        <name>substrate</name>
    </ligand>
</feature>
<feature type="binding site" evidence="1">
    <location>
        <position position="60"/>
    </location>
    <ligand>
        <name>substrate</name>
    </ligand>
</feature>
<feature type="binding site" evidence="1">
    <location>
        <begin position="87"/>
        <end position="90"/>
    </location>
    <ligand>
        <name>substrate</name>
    </ligand>
</feature>
<feature type="binding site" evidence="1">
    <location>
        <position position="98"/>
    </location>
    <ligand>
        <name>substrate</name>
    </ligand>
</feature>
<feature type="binding site" evidence="1">
    <location>
        <begin position="114"/>
        <end position="115"/>
    </location>
    <ligand>
        <name>substrate</name>
    </ligand>
</feature>
<feature type="binding site" evidence="1">
    <location>
        <begin position="183"/>
        <end position="184"/>
    </location>
    <ligand>
        <name>substrate</name>
    </ligand>
</feature>
<feature type="site" description="Transition state stabilizer" evidence="1">
    <location>
        <position position="182"/>
    </location>
</feature>
<accession>Q660L2</accession>
<gene>
    <name evidence="1" type="primary">gpmA</name>
    <name type="ordered locus">BG0681</name>
</gene>
<reference key="1">
    <citation type="journal article" date="2004" name="Nucleic Acids Res.">
        <title>Comparative analysis of the Borrelia garinii genome.</title>
        <authorList>
            <person name="Gloeckner G."/>
            <person name="Lehmann R."/>
            <person name="Romualdi A."/>
            <person name="Pradella S."/>
            <person name="Schulte-Spechtel U."/>
            <person name="Schilhabel M."/>
            <person name="Wilske B."/>
            <person name="Suehnel J."/>
            <person name="Platzer M."/>
        </authorList>
    </citation>
    <scope>NUCLEOTIDE SEQUENCE [LARGE SCALE GENOMIC DNA]</scope>
    <source>
        <strain>ATCC BAA-2496 / DSM 23469 / PBi</strain>
    </source>
</reference>
<comment type="function">
    <text evidence="1">Catalyzes the interconversion of 2-phosphoglycerate and 3-phosphoglycerate.</text>
</comment>
<comment type="catalytic activity">
    <reaction evidence="1">
        <text>(2R)-2-phosphoglycerate = (2R)-3-phosphoglycerate</text>
        <dbReference type="Rhea" id="RHEA:15901"/>
        <dbReference type="ChEBI" id="CHEBI:58272"/>
        <dbReference type="ChEBI" id="CHEBI:58289"/>
        <dbReference type="EC" id="5.4.2.11"/>
    </reaction>
</comment>
<comment type="pathway">
    <text evidence="1">Carbohydrate degradation; glycolysis; pyruvate from D-glyceraldehyde 3-phosphate: step 3/5.</text>
</comment>
<comment type="similarity">
    <text evidence="1">Belongs to the phosphoglycerate mutase family. BPG-dependent PGAM subfamily.</text>
</comment>
<dbReference type="EC" id="5.4.2.11" evidence="1"/>
<dbReference type="EMBL" id="CP000013">
    <property type="protein sequence ID" value="AAU07509.1"/>
    <property type="molecule type" value="Genomic_DNA"/>
</dbReference>
<dbReference type="RefSeq" id="WP_011193964.1">
    <property type="nucleotide sequence ID" value="NC_006156.1"/>
</dbReference>
<dbReference type="SMR" id="Q660L2"/>
<dbReference type="GeneID" id="45161456"/>
<dbReference type="KEGG" id="bga:BG0681"/>
<dbReference type="eggNOG" id="COG0588">
    <property type="taxonomic scope" value="Bacteria"/>
</dbReference>
<dbReference type="HOGENOM" id="CLU_033323_1_1_12"/>
<dbReference type="OrthoDB" id="9781415at2"/>
<dbReference type="UniPathway" id="UPA00109">
    <property type="reaction ID" value="UER00186"/>
</dbReference>
<dbReference type="Proteomes" id="UP000002276">
    <property type="component" value="Chromosome"/>
</dbReference>
<dbReference type="GO" id="GO:0004619">
    <property type="term" value="F:phosphoglycerate mutase activity"/>
    <property type="evidence" value="ECO:0007669"/>
    <property type="project" value="UniProtKB-EC"/>
</dbReference>
<dbReference type="GO" id="GO:0006094">
    <property type="term" value="P:gluconeogenesis"/>
    <property type="evidence" value="ECO:0007669"/>
    <property type="project" value="UniProtKB-UniRule"/>
</dbReference>
<dbReference type="GO" id="GO:0006096">
    <property type="term" value="P:glycolytic process"/>
    <property type="evidence" value="ECO:0007669"/>
    <property type="project" value="UniProtKB-UniRule"/>
</dbReference>
<dbReference type="CDD" id="cd07067">
    <property type="entry name" value="HP_PGM_like"/>
    <property type="match status" value="1"/>
</dbReference>
<dbReference type="FunFam" id="3.40.50.1240:FF:000003">
    <property type="entry name" value="2,3-bisphosphoglycerate-dependent phosphoglycerate mutase"/>
    <property type="match status" value="1"/>
</dbReference>
<dbReference type="Gene3D" id="3.40.50.1240">
    <property type="entry name" value="Phosphoglycerate mutase-like"/>
    <property type="match status" value="1"/>
</dbReference>
<dbReference type="HAMAP" id="MF_01039">
    <property type="entry name" value="PGAM_GpmA"/>
    <property type="match status" value="1"/>
</dbReference>
<dbReference type="InterPro" id="IPR013078">
    <property type="entry name" value="His_Pase_superF_clade-1"/>
</dbReference>
<dbReference type="InterPro" id="IPR029033">
    <property type="entry name" value="His_PPase_superfam"/>
</dbReference>
<dbReference type="InterPro" id="IPR001345">
    <property type="entry name" value="PG/BPGM_mutase_AS"/>
</dbReference>
<dbReference type="InterPro" id="IPR005952">
    <property type="entry name" value="Phosphogly_mut1"/>
</dbReference>
<dbReference type="NCBIfam" id="TIGR01258">
    <property type="entry name" value="pgm_1"/>
    <property type="match status" value="1"/>
</dbReference>
<dbReference type="NCBIfam" id="NF010713">
    <property type="entry name" value="PRK14115.1"/>
    <property type="match status" value="1"/>
</dbReference>
<dbReference type="PANTHER" id="PTHR11931">
    <property type="entry name" value="PHOSPHOGLYCERATE MUTASE"/>
    <property type="match status" value="1"/>
</dbReference>
<dbReference type="Pfam" id="PF00300">
    <property type="entry name" value="His_Phos_1"/>
    <property type="match status" value="1"/>
</dbReference>
<dbReference type="PIRSF" id="PIRSF000709">
    <property type="entry name" value="6PFK_2-Ptase"/>
    <property type="match status" value="1"/>
</dbReference>
<dbReference type="SMART" id="SM00855">
    <property type="entry name" value="PGAM"/>
    <property type="match status" value="1"/>
</dbReference>
<dbReference type="SUPFAM" id="SSF53254">
    <property type="entry name" value="Phosphoglycerate mutase-like"/>
    <property type="match status" value="1"/>
</dbReference>
<dbReference type="PROSITE" id="PS00175">
    <property type="entry name" value="PG_MUTASE"/>
    <property type="match status" value="1"/>
</dbReference>
<sequence length="248" mass="28257">MYKLVLVRHGESEWNKENLFTGWTDVKLSDKGINEALEAGLLLKQEGYSFDIAFSSLLSRANDTLNIILRELGQSYISVKKTWRLNERHYGALQGLNKSETAAKYGEGKVLIWRRSYDVPPMSLDESEDRHPIKDPRYKYIPKRELPSTECLKDTVTRVIPYWTDEIAKEVLGGKKVIVAAHGNSLRALVKYLDNLSEEDVLKLNIPTGIPLVYELDKDLNPIKHYYLGDESKIKSAMESVASQGKLK</sequence>
<keyword id="KW-0312">Gluconeogenesis</keyword>
<keyword id="KW-0324">Glycolysis</keyword>
<keyword id="KW-0413">Isomerase</keyword>
<protein>
    <recommendedName>
        <fullName evidence="1">2,3-bisphosphoglycerate-dependent phosphoglycerate mutase</fullName>
        <shortName evidence="1">BPG-dependent PGAM</shortName>
        <shortName evidence="1">PGAM</shortName>
        <shortName evidence="1">Phosphoglyceromutase</shortName>
        <shortName evidence="1">dPGM</shortName>
        <ecNumber evidence="1">5.4.2.11</ecNumber>
    </recommendedName>
</protein>
<name>GPMA_BORGP</name>
<evidence type="ECO:0000255" key="1">
    <source>
        <dbReference type="HAMAP-Rule" id="MF_01039"/>
    </source>
</evidence>